<proteinExistence type="inferred from homology"/>
<sequence length="349" mass="39734">MSNLFFVILLAVGFGVWKVLDYFQLPNTFSILLLILTALSGVLWCYHRFVVLPKRHRQVARAEQRSGKTLSEEEKAKIEPISEASEFLSSLFPVLAVVFLVRSFLFEPFQIPSGSMESTLRVGDFLVVNKYAYGVKDPIFQNTIIAGEKPQRGDVIVFKAPQQALIRTGLGATRAAFAENLALSSKDNMSGVDYIKRIVGKGGDRVIFDVEQKTLKVVYGKEGKPCEIDCETKAFEYTQNPTNPAFPNELELTEKGDVTHNVLISEYRRYSDLEFFPQEGMQTAEWLVPEGQYFVMGDHRDHSDDSRFWGFVPEKNIVGKATYIWMSLEKEANEWPTGFRFERFFTAIK</sequence>
<reference key="1">
    <citation type="journal article" date="1995" name="Science">
        <title>Whole-genome random sequencing and assembly of Haemophilus influenzae Rd.</title>
        <authorList>
            <person name="Fleischmann R.D."/>
            <person name="Adams M.D."/>
            <person name="White O."/>
            <person name="Clayton R.A."/>
            <person name="Kirkness E.F."/>
            <person name="Kerlavage A.R."/>
            <person name="Bult C.J."/>
            <person name="Tomb J.-F."/>
            <person name="Dougherty B.A."/>
            <person name="Merrick J.M."/>
            <person name="McKenney K."/>
            <person name="Sutton G.G."/>
            <person name="FitzHugh W."/>
            <person name="Fields C.A."/>
            <person name="Gocayne J.D."/>
            <person name="Scott J.D."/>
            <person name="Shirley R."/>
            <person name="Liu L.-I."/>
            <person name="Glodek A."/>
            <person name="Kelley J.M."/>
            <person name="Weidman J.F."/>
            <person name="Phillips C.A."/>
            <person name="Spriggs T."/>
            <person name="Hedblom E."/>
            <person name="Cotton M.D."/>
            <person name="Utterback T.R."/>
            <person name="Hanna M.C."/>
            <person name="Nguyen D.T."/>
            <person name="Saudek D.M."/>
            <person name="Brandon R.C."/>
            <person name="Fine L.D."/>
            <person name="Fritchman J.L."/>
            <person name="Fuhrmann J.L."/>
            <person name="Geoghagen N.S.M."/>
            <person name="Gnehm C.L."/>
            <person name="McDonald L.A."/>
            <person name="Small K.V."/>
            <person name="Fraser C.M."/>
            <person name="Smith H.O."/>
            <person name="Venter J.C."/>
        </authorList>
    </citation>
    <scope>NUCLEOTIDE SEQUENCE [LARGE SCALE GENOMIC DNA]</scope>
    <source>
        <strain>ATCC 51907 / DSM 11121 / KW20 / Rd</strain>
    </source>
</reference>
<keyword id="KW-0997">Cell inner membrane</keyword>
<keyword id="KW-1003">Cell membrane</keyword>
<keyword id="KW-0378">Hydrolase</keyword>
<keyword id="KW-0472">Membrane</keyword>
<keyword id="KW-0645">Protease</keyword>
<keyword id="KW-1185">Reference proteome</keyword>
<keyword id="KW-0812">Transmembrane</keyword>
<keyword id="KW-1133">Transmembrane helix</keyword>
<organism>
    <name type="scientific">Haemophilus influenzae (strain ATCC 51907 / DSM 11121 / KW20 / Rd)</name>
    <dbReference type="NCBI Taxonomy" id="71421"/>
    <lineage>
        <taxon>Bacteria</taxon>
        <taxon>Pseudomonadati</taxon>
        <taxon>Pseudomonadota</taxon>
        <taxon>Gammaproteobacteria</taxon>
        <taxon>Pasteurellales</taxon>
        <taxon>Pasteurellaceae</taxon>
        <taxon>Haemophilus</taxon>
    </lineage>
</organism>
<dbReference type="EC" id="3.4.21.89"/>
<dbReference type="EMBL" id="L42023">
    <property type="protein sequence ID" value="AAC21693.1"/>
    <property type="molecule type" value="Genomic_DNA"/>
</dbReference>
<dbReference type="PIR" id="H64042">
    <property type="entry name" value="H64042"/>
</dbReference>
<dbReference type="RefSeq" id="NP_438188.1">
    <property type="nucleotide sequence ID" value="NC_000907.1"/>
</dbReference>
<dbReference type="SMR" id="P44454"/>
<dbReference type="STRING" id="71421.HI_0015"/>
<dbReference type="MEROPS" id="S26.001"/>
<dbReference type="EnsemblBacteria" id="AAC21693">
    <property type="protein sequence ID" value="AAC21693"/>
    <property type="gene ID" value="HI_0015"/>
</dbReference>
<dbReference type="KEGG" id="hin:HI_0015"/>
<dbReference type="PATRIC" id="fig|71421.8.peg.15"/>
<dbReference type="eggNOG" id="COG0681">
    <property type="taxonomic scope" value="Bacteria"/>
</dbReference>
<dbReference type="HOGENOM" id="CLU_028723_1_1_6"/>
<dbReference type="OrthoDB" id="9815782at2"/>
<dbReference type="PhylomeDB" id="P44454"/>
<dbReference type="BioCyc" id="HINF71421:G1GJ1-15-MONOMER"/>
<dbReference type="Proteomes" id="UP000000579">
    <property type="component" value="Chromosome"/>
</dbReference>
<dbReference type="GO" id="GO:0005886">
    <property type="term" value="C:plasma membrane"/>
    <property type="evidence" value="ECO:0000318"/>
    <property type="project" value="GO_Central"/>
</dbReference>
<dbReference type="GO" id="GO:0004252">
    <property type="term" value="F:serine-type endopeptidase activity"/>
    <property type="evidence" value="ECO:0000318"/>
    <property type="project" value="GO_Central"/>
</dbReference>
<dbReference type="GO" id="GO:0006465">
    <property type="term" value="P:signal peptide processing"/>
    <property type="evidence" value="ECO:0000318"/>
    <property type="project" value="GO_Central"/>
</dbReference>
<dbReference type="CDD" id="cd06530">
    <property type="entry name" value="S26_SPase_I"/>
    <property type="match status" value="1"/>
</dbReference>
<dbReference type="Gene3D" id="2.10.109.10">
    <property type="entry name" value="Umud Fragment, subunit A"/>
    <property type="match status" value="1"/>
</dbReference>
<dbReference type="InterPro" id="IPR036286">
    <property type="entry name" value="LexA/Signal_pep-like_sf"/>
</dbReference>
<dbReference type="InterPro" id="IPR000223">
    <property type="entry name" value="Pept_S26A_signal_pept_1"/>
</dbReference>
<dbReference type="InterPro" id="IPR019758">
    <property type="entry name" value="Pept_S26A_signal_pept_1_CS"/>
</dbReference>
<dbReference type="InterPro" id="IPR019757">
    <property type="entry name" value="Pept_S26A_signal_pept_1_Lys-AS"/>
</dbReference>
<dbReference type="InterPro" id="IPR019756">
    <property type="entry name" value="Pept_S26A_signal_pept_1_Ser-AS"/>
</dbReference>
<dbReference type="InterPro" id="IPR019533">
    <property type="entry name" value="Peptidase_S26"/>
</dbReference>
<dbReference type="NCBIfam" id="TIGR02227">
    <property type="entry name" value="sigpep_I_bact"/>
    <property type="match status" value="1"/>
</dbReference>
<dbReference type="PANTHER" id="PTHR43390:SF1">
    <property type="entry name" value="CHLOROPLAST PROCESSING PEPTIDASE"/>
    <property type="match status" value="1"/>
</dbReference>
<dbReference type="PANTHER" id="PTHR43390">
    <property type="entry name" value="SIGNAL PEPTIDASE I"/>
    <property type="match status" value="1"/>
</dbReference>
<dbReference type="Pfam" id="PF10502">
    <property type="entry name" value="Peptidase_S26"/>
    <property type="match status" value="1"/>
</dbReference>
<dbReference type="PRINTS" id="PR00727">
    <property type="entry name" value="LEADERPTASE"/>
</dbReference>
<dbReference type="SUPFAM" id="SSF51306">
    <property type="entry name" value="LexA/Signal peptidase"/>
    <property type="match status" value="1"/>
</dbReference>
<dbReference type="PROSITE" id="PS00501">
    <property type="entry name" value="SPASE_I_1"/>
    <property type="match status" value="1"/>
</dbReference>
<dbReference type="PROSITE" id="PS00760">
    <property type="entry name" value="SPASE_I_2"/>
    <property type="match status" value="1"/>
</dbReference>
<dbReference type="PROSITE" id="PS00761">
    <property type="entry name" value="SPASE_I_3"/>
    <property type="match status" value="1"/>
</dbReference>
<name>LEP_HAEIN</name>
<protein>
    <recommendedName>
        <fullName>Signal peptidase I</fullName>
        <shortName>SPase I</shortName>
        <ecNumber>3.4.21.89</ecNumber>
    </recommendedName>
    <alternativeName>
        <fullName>Leader peptidase I</fullName>
    </alternativeName>
</protein>
<feature type="chain" id="PRO_0000109507" description="Signal peptidase I">
    <location>
        <begin position="1"/>
        <end position="349"/>
    </location>
</feature>
<feature type="transmembrane region" description="Helical" evidence="2">
    <location>
        <begin position="3"/>
        <end position="23"/>
    </location>
</feature>
<feature type="transmembrane region" description="Helical" evidence="2">
    <location>
        <begin position="25"/>
        <end position="45"/>
    </location>
</feature>
<feature type="topological domain" description="Cytoplasmic" evidence="2">
    <location>
        <begin position="46"/>
        <end position="80"/>
    </location>
</feature>
<feature type="transmembrane region" description="Helical" evidence="2">
    <location>
        <begin position="81"/>
        <end position="101"/>
    </location>
</feature>
<feature type="topological domain" description="Periplasmic" evidence="2">
    <location>
        <begin position="102"/>
        <end position="349"/>
    </location>
</feature>
<feature type="active site" evidence="1">
    <location>
        <position position="115"/>
    </location>
</feature>
<feature type="active site" evidence="1">
    <location>
        <position position="196"/>
    </location>
</feature>
<accession>P44454</accession>
<evidence type="ECO:0000250" key="1"/>
<evidence type="ECO:0000255" key="2"/>
<evidence type="ECO:0000305" key="3"/>
<gene>
    <name type="primary">lepB</name>
    <name type="ordered locus">HI_0015</name>
</gene>
<comment type="catalytic activity">
    <reaction>
        <text>Cleavage of hydrophobic, N-terminal signal or leader sequences from secreted and periplasmic proteins.</text>
        <dbReference type="EC" id="3.4.21.89"/>
    </reaction>
</comment>
<comment type="subcellular location">
    <subcellularLocation>
        <location evidence="1">Cell inner membrane</location>
        <topology evidence="1">Multi-pass membrane protein</topology>
    </subcellularLocation>
</comment>
<comment type="similarity">
    <text evidence="3">Belongs to the peptidase S26 family.</text>
</comment>